<name>PEN1_PENVA</name>
<accession>P81056</accession>
<protein>
    <recommendedName>
        <fullName>Penaeidin-1</fullName>
        <shortName>P1</shortName>
        <shortName>Pen-1</shortName>
    </recommendedName>
</protein>
<sequence>YRGGYTGPIPRPPPIGRPPLRLVVCACYRLSVSDARNCCIKFGSCCHLVK</sequence>
<reference key="1">
    <citation type="journal article" date="1997" name="J. Biol. Chem.">
        <title>Penaeidins, a new family of antimicrobial peptides isolated from the shrimp Penaeus vannamei (Decapoda).</title>
        <authorList>
            <person name="Destoumieux D."/>
            <person name="Bulet P."/>
            <person name="Loew D."/>
            <person name="van Dorsselaer A."/>
            <person name="Rodriguez J."/>
            <person name="Bachere E."/>
        </authorList>
    </citation>
    <scope>PROTEIN SEQUENCE</scope>
    <scope>FUNCTION</scope>
    <scope>MASS SPECTROMETRY</scope>
    <source>
        <tissue>Hemocyte</tissue>
    </source>
</reference>
<reference key="2">
    <citation type="journal article" date="2000" name="J. Cell Sci.">
        <title>Penaeidins, antimicrobial peptides with chitin-binding activity, are produced and stored in shrimp granulocytes and released after microbial challenge.</title>
        <authorList>
            <person name="Destoumieux D."/>
            <person name="Munoz M."/>
            <person name="Cosseau C."/>
            <person name="Rodriguez J."/>
            <person name="Bulet P."/>
            <person name="Comps M."/>
            <person name="Bachere E."/>
        </authorList>
    </citation>
    <scope>CHITIN-BINDING PROPERTIES</scope>
    <scope>TISSUE SPECIFICITY</scope>
    <scope>SUBCELLULAR LOCATION</scope>
    <scope>DEVELOPMENTAL STAGE</scope>
    <source>
        <tissue>Hemocyte</tissue>
    </source>
</reference>
<reference key="3">
    <citation type="journal article" date="2000" name="Cell. Mol. Life Sci.">
        <title>Penaeidins, a family of antimicrobial peptides from penaeid shrimp (Crustacea, Decapoda).</title>
        <authorList>
            <person name="Destoumieux D."/>
            <person name="Munoz M."/>
            <person name="Bulet P."/>
            <person name="Bachere E."/>
        </authorList>
    </citation>
    <scope>REVIEW</scope>
</reference>
<evidence type="ECO:0000250" key="1"/>
<evidence type="ECO:0000269" key="2">
    <source>
    </source>
</evidence>
<evidence type="ECO:0000269" key="3">
    <source>
    </source>
</evidence>
<evidence type="ECO:0000305" key="4"/>
<comment type="function">
    <text evidence="3">Antibacterial activity against M.luteus and E.coli bacteria. Antifungal activity against N.crassa and F.oxysporum. Presents chitin-binding activity.</text>
</comment>
<comment type="subcellular location">
    <subcellularLocation>
        <location evidence="2">Cytoplasmic granule</location>
    </subcellularLocation>
    <text>Cytoplasmic granules of hemocytes and to a lesser extent in small granules of hemocytes.</text>
</comment>
<comment type="tissue specificity">
    <text evidence="2">Higher expression in hemocytes and to a lesser extent in heart, testis, gills, intestine, lymphoid organ and hepatopancreas. Traces in eyes and subcuticular epithelium. Not present in the brain.</text>
</comment>
<comment type="developmental stage">
    <text evidence="2">Expression decreases 3 hours after microbial challenge to return to control levels after 12 hours and slightly increases after 24 hours.</text>
</comment>
<comment type="mass spectrometry"/>
<comment type="similarity">
    <text evidence="4">Belongs to the penaeidin family.</text>
</comment>
<feature type="chain" id="PRO_0000215909" description="Penaeidin-1">
    <location>
        <begin position="1"/>
        <end position="50"/>
    </location>
</feature>
<feature type="disulfide bond" evidence="1">
    <location>
        <begin position="25"/>
        <end position="38"/>
    </location>
</feature>
<feature type="disulfide bond" evidence="1">
    <location>
        <begin position="27"/>
        <end position="45"/>
    </location>
</feature>
<feature type="disulfide bond" evidence="1">
    <location>
        <begin position="39"/>
        <end position="46"/>
    </location>
</feature>
<dbReference type="SMR" id="P81056"/>
<dbReference type="GO" id="GO:0005737">
    <property type="term" value="C:cytoplasm"/>
    <property type="evidence" value="ECO:0007669"/>
    <property type="project" value="InterPro"/>
</dbReference>
<dbReference type="GO" id="GO:0008061">
    <property type="term" value="F:chitin binding"/>
    <property type="evidence" value="ECO:0007669"/>
    <property type="project" value="UniProtKB-KW"/>
</dbReference>
<dbReference type="GO" id="GO:0042742">
    <property type="term" value="P:defense response to bacterium"/>
    <property type="evidence" value="ECO:0007669"/>
    <property type="project" value="UniProtKB-KW"/>
</dbReference>
<dbReference type="GO" id="GO:0050832">
    <property type="term" value="P:defense response to fungus"/>
    <property type="evidence" value="ECO:0007669"/>
    <property type="project" value="UniProtKB-KW"/>
</dbReference>
<dbReference type="GO" id="GO:0031640">
    <property type="term" value="P:killing of cells of another organism"/>
    <property type="evidence" value="ECO:0007669"/>
    <property type="project" value="UniProtKB-KW"/>
</dbReference>
<dbReference type="InterPro" id="IPR009226">
    <property type="entry name" value="Penaeidin"/>
</dbReference>
<dbReference type="Pfam" id="PF05927">
    <property type="entry name" value="Penaeidin"/>
    <property type="match status" value="1"/>
</dbReference>
<keyword id="KW-0044">Antibiotic</keyword>
<keyword id="KW-0929">Antimicrobial</keyword>
<keyword id="KW-0147">Chitin-binding</keyword>
<keyword id="KW-0903">Direct protein sequencing</keyword>
<keyword id="KW-1015">Disulfide bond</keyword>
<keyword id="KW-0295">Fungicide</keyword>
<organism>
    <name type="scientific">Penaeus vannamei</name>
    <name type="common">Whiteleg shrimp</name>
    <name type="synonym">Litopenaeus vannamei</name>
    <dbReference type="NCBI Taxonomy" id="6689"/>
    <lineage>
        <taxon>Eukaryota</taxon>
        <taxon>Metazoa</taxon>
        <taxon>Ecdysozoa</taxon>
        <taxon>Arthropoda</taxon>
        <taxon>Crustacea</taxon>
        <taxon>Multicrustacea</taxon>
        <taxon>Malacostraca</taxon>
        <taxon>Eumalacostraca</taxon>
        <taxon>Eucarida</taxon>
        <taxon>Decapoda</taxon>
        <taxon>Dendrobranchiata</taxon>
        <taxon>Penaeoidea</taxon>
        <taxon>Penaeidae</taxon>
        <taxon>Penaeus</taxon>
    </lineage>
</organism>
<proteinExistence type="evidence at protein level"/>